<protein>
    <recommendedName>
        <fullName evidence="1">Elongation factor Ts</fullName>
        <shortName evidence="1">EF-Ts</shortName>
    </recommendedName>
</protein>
<comment type="function">
    <text evidence="1">Associates with the EF-Tu.GDP complex and induces the exchange of GDP to GTP. It remains bound to the aminoacyl-tRNA.EF-Tu.GTP complex up to the GTP hydrolysis stage on the ribosome.</text>
</comment>
<comment type="subcellular location">
    <subcellularLocation>
        <location evidence="1">Cytoplasm</location>
    </subcellularLocation>
</comment>
<comment type="similarity">
    <text evidence="1">Belongs to the EF-Ts family.</text>
</comment>
<keyword id="KW-0963">Cytoplasm</keyword>
<keyword id="KW-0251">Elongation factor</keyword>
<keyword id="KW-0648">Protein biosynthesis</keyword>
<organism>
    <name type="scientific">Mycobacterium bovis (strain BCG / Tokyo 172 / ATCC 35737 / TMC 1019)</name>
    <dbReference type="NCBI Taxonomy" id="561275"/>
    <lineage>
        <taxon>Bacteria</taxon>
        <taxon>Bacillati</taxon>
        <taxon>Actinomycetota</taxon>
        <taxon>Actinomycetes</taxon>
        <taxon>Mycobacteriales</taxon>
        <taxon>Mycobacteriaceae</taxon>
        <taxon>Mycobacterium</taxon>
        <taxon>Mycobacterium tuberculosis complex</taxon>
    </lineage>
</organism>
<gene>
    <name evidence="1" type="primary">tsf</name>
    <name type="ordered locus">JTY_2905</name>
</gene>
<feature type="chain" id="PRO_1000117591" description="Elongation factor Ts">
    <location>
        <begin position="1"/>
        <end position="271"/>
    </location>
</feature>
<feature type="region of interest" description="Involved in Mg(2+) ion dislocation from EF-Tu" evidence="1">
    <location>
        <begin position="76"/>
        <end position="79"/>
    </location>
</feature>
<dbReference type="EMBL" id="AP010918">
    <property type="protein sequence ID" value="BAH27183.1"/>
    <property type="molecule type" value="Genomic_DNA"/>
</dbReference>
<dbReference type="RefSeq" id="WP_010950794.1">
    <property type="nucleotide sequence ID" value="NZ_CP014566.1"/>
</dbReference>
<dbReference type="SMR" id="C1AG04"/>
<dbReference type="KEGG" id="mbt:JTY_2905"/>
<dbReference type="HOGENOM" id="CLU_047155_0_0_11"/>
<dbReference type="GO" id="GO:0005737">
    <property type="term" value="C:cytoplasm"/>
    <property type="evidence" value="ECO:0007669"/>
    <property type="project" value="UniProtKB-SubCell"/>
</dbReference>
<dbReference type="GO" id="GO:0003746">
    <property type="term" value="F:translation elongation factor activity"/>
    <property type="evidence" value="ECO:0007669"/>
    <property type="project" value="UniProtKB-UniRule"/>
</dbReference>
<dbReference type="CDD" id="cd14275">
    <property type="entry name" value="UBA_EF-Ts"/>
    <property type="match status" value="1"/>
</dbReference>
<dbReference type="FunFam" id="1.10.286.20:FF:000001">
    <property type="entry name" value="Elongation factor Ts"/>
    <property type="match status" value="1"/>
</dbReference>
<dbReference type="FunFam" id="1.10.8.10:FF:000001">
    <property type="entry name" value="Elongation factor Ts"/>
    <property type="match status" value="1"/>
</dbReference>
<dbReference type="FunFam" id="3.30.479.20:FF:000021">
    <property type="entry name" value="Elongation factor Ts"/>
    <property type="match status" value="1"/>
</dbReference>
<dbReference type="Gene3D" id="1.10.286.20">
    <property type="match status" value="1"/>
</dbReference>
<dbReference type="Gene3D" id="1.10.8.10">
    <property type="entry name" value="DNA helicase RuvA subunit, C-terminal domain"/>
    <property type="match status" value="1"/>
</dbReference>
<dbReference type="Gene3D" id="3.30.479.20">
    <property type="entry name" value="Elongation factor Ts, dimerisation domain"/>
    <property type="match status" value="2"/>
</dbReference>
<dbReference type="HAMAP" id="MF_00050">
    <property type="entry name" value="EF_Ts"/>
    <property type="match status" value="1"/>
</dbReference>
<dbReference type="InterPro" id="IPR036402">
    <property type="entry name" value="EF-Ts_dimer_sf"/>
</dbReference>
<dbReference type="InterPro" id="IPR001816">
    <property type="entry name" value="Transl_elong_EFTs/EF1B"/>
</dbReference>
<dbReference type="InterPro" id="IPR014039">
    <property type="entry name" value="Transl_elong_EFTs/EF1B_dimer"/>
</dbReference>
<dbReference type="InterPro" id="IPR018101">
    <property type="entry name" value="Transl_elong_Ts_CS"/>
</dbReference>
<dbReference type="InterPro" id="IPR009060">
    <property type="entry name" value="UBA-like_sf"/>
</dbReference>
<dbReference type="NCBIfam" id="TIGR00116">
    <property type="entry name" value="tsf"/>
    <property type="match status" value="1"/>
</dbReference>
<dbReference type="PANTHER" id="PTHR11741">
    <property type="entry name" value="ELONGATION FACTOR TS"/>
    <property type="match status" value="1"/>
</dbReference>
<dbReference type="PANTHER" id="PTHR11741:SF0">
    <property type="entry name" value="ELONGATION FACTOR TS, MITOCHONDRIAL"/>
    <property type="match status" value="1"/>
</dbReference>
<dbReference type="Pfam" id="PF00889">
    <property type="entry name" value="EF_TS"/>
    <property type="match status" value="1"/>
</dbReference>
<dbReference type="SUPFAM" id="SSF54713">
    <property type="entry name" value="Elongation factor Ts (EF-Ts), dimerisation domain"/>
    <property type="match status" value="2"/>
</dbReference>
<dbReference type="SUPFAM" id="SSF46934">
    <property type="entry name" value="UBA-like"/>
    <property type="match status" value="1"/>
</dbReference>
<dbReference type="PROSITE" id="PS01126">
    <property type="entry name" value="EF_TS_1"/>
    <property type="match status" value="1"/>
</dbReference>
<dbReference type="PROSITE" id="PS01127">
    <property type="entry name" value="EF_TS_2"/>
    <property type="match status" value="1"/>
</dbReference>
<reference key="1">
    <citation type="journal article" date="2009" name="Vaccine">
        <title>Whole genome sequence analysis of Mycobacterium bovis bacillus Calmette-Guerin (BCG) Tokyo 172: a comparative study of BCG vaccine substrains.</title>
        <authorList>
            <person name="Seki M."/>
            <person name="Honda I."/>
            <person name="Fujita I."/>
            <person name="Yano I."/>
            <person name="Yamamoto S."/>
            <person name="Koyama A."/>
        </authorList>
    </citation>
    <scope>NUCLEOTIDE SEQUENCE [LARGE SCALE GENOMIC DNA]</scope>
    <source>
        <strain>BCG / Tokyo 172 / ATCC 35737 / TMC 1019</strain>
    </source>
</reference>
<sequence length="271" mass="28785">MANFTAADVKRLRELTGAGMLACKNALAETDGDFDKAVEALRIKGAKDVGKRAERATAEGLVAAKDGALIELNCETDFVAKNAEFQTLADQVVAAAAAAKPADVDALKGASIGDKTVEQAIAELSAKIGEKLELRRVAIFDGTVEAYLHRRSADLPPAVGVLVEYRGDDAAAAHAVALQIAALRARYLSRDDVPEDIVASERRIAEETARAEGKPEQALPKIVEGRLNGFFKDAVLLEQASVSDNKKTVKALLDVAGVMVTRFVRFEVGQA</sequence>
<evidence type="ECO:0000255" key="1">
    <source>
        <dbReference type="HAMAP-Rule" id="MF_00050"/>
    </source>
</evidence>
<accession>C1AG04</accession>
<proteinExistence type="inferred from homology"/>
<name>EFTS_MYCBT</name>